<feature type="chain" id="PRO_0000379057" description="Protein Hook homolog">
    <location>
        <begin position="1"/>
        <end position="723"/>
    </location>
</feature>
<feature type="domain" description="Calponin-homology (CH)" evidence="3">
    <location>
        <begin position="4"/>
        <end position="120"/>
    </location>
</feature>
<feature type="region of interest" description="Disordered" evidence="4">
    <location>
        <begin position="682"/>
        <end position="723"/>
    </location>
</feature>
<feature type="coiled-coil region" evidence="2">
    <location>
        <begin position="162"/>
        <end position="423"/>
    </location>
</feature>
<feature type="coiled-coil region" evidence="2">
    <location>
        <begin position="457"/>
        <end position="665"/>
    </location>
</feature>
<feature type="compositionally biased region" description="Low complexity" evidence="4">
    <location>
        <begin position="696"/>
        <end position="711"/>
    </location>
</feature>
<proteinExistence type="inferred from homology"/>
<accession>B6MFW3</accession>
<comment type="function">
    <text evidence="1">May function to promote vesicle trafficking and/or fusion. May act to link a number of membrane-bound organelles to the cytoskeleton (By similarity).</text>
</comment>
<comment type="subunit">
    <text evidence="1">Interacts with microtubules.</text>
</comment>
<comment type="subcellular location">
    <subcellularLocation>
        <location evidence="1">Cytoplasm</location>
        <location evidence="1">Cytoskeleton</location>
    </subcellularLocation>
</comment>
<comment type="similarity">
    <text evidence="5">Belongs to the hook family.</text>
</comment>
<name>HOOK_BRAFL</name>
<dbReference type="EMBL" id="GG666529">
    <property type="protein sequence ID" value="EEN58625.1"/>
    <property type="molecule type" value="Genomic_DNA"/>
</dbReference>
<dbReference type="RefSeq" id="XP_002602613.1">
    <property type="nucleotide sequence ID" value="XM_002602567.1"/>
</dbReference>
<dbReference type="SMR" id="B6MFW3"/>
<dbReference type="STRING" id="7739.B6MFW3"/>
<dbReference type="eggNOG" id="ENOG502QQM8">
    <property type="taxonomic scope" value="Eukaryota"/>
</dbReference>
<dbReference type="InParanoid" id="B6MFW3"/>
<dbReference type="OrthoDB" id="49395at2759"/>
<dbReference type="Proteomes" id="UP000001554">
    <property type="component" value="Unplaced"/>
</dbReference>
<dbReference type="GO" id="GO:0005813">
    <property type="term" value="C:centrosome"/>
    <property type="evidence" value="ECO:0000318"/>
    <property type="project" value="GO_Central"/>
</dbReference>
<dbReference type="GO" id="GO:0005737">
    <property type="term" value="C:cytoplasm"/>
    <property type="evidence" value="ECO:0000318"/>
    <property type="project" value="GO_Central"/>
</dbReference>
<dbReference type="GO" id="GO:0005874">
    <property type="term" value="C:microtubule"/>
    <property type="evidence" value="ECO:0007669"/>
    <property type="project" value="UniProtKB-KW"/>
</dbReference>
<dbReference type="GO" id="GO:0051959">
    <property type="term" value="F:dynein light intermediate chain binding"/>
    <property type="evidence" value="ECO:0000318"/>
    <property type="project" value="GO_Central"/>
</dbReference>
<dbReference type="GO" id="GO:0008017">
    <property type="term" value="F:microtubule binding"/>
    <property type="evidence" value="ECO:0000318"/>
    <property type="project" value="GO_Central"/>
</dbReference>
<dbReference type="GO" id="GO:0031122">
    <property type="term" value="P:cytoplasmic microtubule organization"/>
    <property type="evidence" value="ECO:0000318"/>
    <property type="project" value="GO_Central"/>
</dbReference>
<dbReference type="GO" id="GO:0030705">
    <property type="term" value="P:cytoskeleton-dependent intracellular transport"/>
    <property type="evidence" value="ECO:0000318"/>
    <property type="project" value="GO_Central"/>
</dbReference>
<dbReference type="GO" id="GO:0015031">
    <property type="term" value="P:protein transport"/>
    <property type="evidence" value="ECO:0007669"/>
    <property type="project" value="UniProtKB-KW"/>
</dbReference>
<dbReference type="CDD" id="cd22222">
    <property type="entry name" value="HkD_Hook"/>
    <property type="match status" value="1"/>
</dbReference>
<dbReference type="FunFam" id="1.10.418.10:FF:000024">
    <property type="entry name" value="Hook homolog 3 (Drosophila)"/>
    <property type="match status" value="1"/>
</dbReference>
<dbReference type="Gene3D" id="1.10.418.10">
    <property type="entry name" value="Calponin-like domain"/>
    <property type="match status" value="1"/>
</dbReference>
<dbReference type="InterPro" id="IPR001715">
    <property type="entry name" value="CH_dom"/>
</dbReference>
<dbReference type="InterPro" id="IPR036872">
    <property type="entry name" value="CH_dom_sf"/>
</dbReference>
<dbReference type="InterPro" id="IPR008636">
    <property type="entry name" value="Hook_C"/>
</dbReference>
<dbReference type="InterPro" id="IPR043936">
    <property type="entry name" value="HOOK_N"/>
</dbReference>
<dbReference type="PANTHER" id="PTHR18947">
    <property type="entry name" value="HOOK PROTEINS"/>
    <property type="match status" value="1"/>
</dbReference>
<dbReference type="PANTHER" id="PTHR18947:SF39">
    <property type="entry name" value="PROTEIN HOOK"/>
    <property type="match status" value="1"/>
</dbReference>
<dbReference type="Pfam" id="PF05622">
    <property type="entry name" value="HOOK"/>
    <property type="match status" value="1"/>
</dbReference>
<dbReference type="Pfam" id="PF19047">
    <property type="entry name" value="HOOK_N"/>
    <property type="match status" value="1"/>
</dbReference>
<dbReference type="SUPFAM" id="SSF116907">
    <property type="entry name" value="Hook domain"/>
    <property type="match status" value="1"/>
</dbReference>
<dbReference type="PROSITE" id="PS50021">
    <property type="entry name" value="CH"/>
    <property type="match status" value="1"/>
</dbReference>
<keyword id="KW-0175">Coiled coil</keyword>
<keyword id="KW-0963">Cytoplasm</keyword>
<keyword id="KW-0206">Cytoskeleton</keyword>
<keyword id="KW-0493">Microtubule</keyword>
<keyword id="KW-0653">Protein transport</keyword>
<keyword id="KW-1185">Reference proteome</keyword>
<keyword id="KW-0813">Transport</keyword>
<reference key="1">
    <citation type="journal article" date="2008" name="Nature">
        <title>The amphioxus genome and the evolution of the chordate karyotype.</title>
        <authorList>
            <person name="Putnam N.H."/>
            <person name="Butts T."/>
            <person name="Ferrier D.E.K."/>
            <person name="Furlong R.F."/>
            <person name="Hellsten U."/>
            <person name="Kawashima T."/>
            <person name="Robinson-Rechavi M."/>
            <person name="Shoguchi E."/>
            <person name="Terry A."/>
            <person name="Yu J.-K."/>
            <person name="Benito-Gutierrez E.L."/>
            <person name="Dubchak I."/>
            <person name="Garcia-Fernandez J."/>
            <person name="Gibson-Brown J.J."/>
            <person name="Grigoriev I.V."/>
            <person name="Horton A.C."/>
            <person name="de Jong P.J."/>
            <person name="Jurka J."/>
            <person name="Kapitonov V.V."/>
            <person name="Kohara Y."/>
            <person name="Kuroki Y."/>
            <person name="Lindquist E."/>
            <person name="Lucas S."/>
            <person name="Osoegawa K."/>
            <person name="Pennacchio L.A."/>
            <person name="Salamov A.A."/>
            <person name="Satou Y."/>
            <person name="Sauka-Spengler T."/>
            <person name="Schmutz J."/>
            <person name="Shin-I T."/>
            <person name="Toyoda A."/>
            <person name="Bronner-Fraser M."/>
            <person name="Fujiyama A."/>
            <person name="Holland L.Z."/>
            <person name="Holland P.W.H."/>
            <person name="Satoh N."/>
            <person name="Rokhsar D.S."/>
        </authorList>
    </citation>
    <scope>NUCLEOTIDE SEQUENCE [LARGE SCALE GENOMIC DNA]</scope>
    <source>
        <strain>S238N-H82</strain>
        <tissue>Testis</tissue>
    </source>
</reference>
<protein>
    <recommendedName>
        <fullName>Protein Hook homolog</fullName>
    </recommendedName>
</protein>
<sequence>MDKTELCECLVQWLQTFNLNAPHKTVEDLGDGVAMSEALCQIAPDYFSESWFGKIKQDAGENWRLRMSNLKKVLTGVLDYYSEVLGQQINDFTLPDVTSIAENYDVEEMGRLLQLILGCAVNCDRKQEYIQNIMGMEEAVQHAVMNAIQELMNKEAPASPGVLPEVEKQLRDTMEELNEVRAAKEEIAQRCHELDMQVQQLMEENTLMKVEKDELSDKVNQVDGYEDTSTPAGRRYIQLTHQVEQLQEETYRLETGRDEYRLKCEEMEKEILDLAGKNEELMALAAETQLLKDEMDILRQSAEKTSKYEQTIETYKKKLEDLADLRRTVEQLQEETYRLETGLSHCELRKANTLRSQLDMYKKQVQELHGKVSEETKRADKAEFELKRSTEKLDTVQKEKQRIVNERDTLKETNEELHCMQLQQGKAMLYSTGSLAGIGSNVESPVGSPIPEVVPPEIKEKLIRLQHENKMLKLKAEGSDDERLAVSQAMLDDAQARTNELETENRLANQRILELQGQLEDMQTEQEEVGSPAKDQDSVALRKKLEEHMEKLKDADSQLQKKKEYIDNLEPKVSSSAEKIQQLQEMLNKKDDDMKAMEERYKRYLEKAKSVIRTLDPKQNQSSTPEVQALKNQLTEKERLIDHLERDHEKAKLTREQEEKLIVSAWYNMGAQLHRKAVEGRLANGGPMQGGQSFLARQRQATSRRTTVSTTHPGHARSVNFVN</sequence>
<gene>
    <name type="ORF">BRAFLDRAFT_281537</name>
</gene>
<organism>
    <name type="scientific">Branchiostoma floridae</name>
    <name type="common">Florida lancelet</name>
    <name type="synonym">Amphioxus</name>
    <dbReference type="NCBI Taxonomy" id="7739"/>
    <lineage>
        <taxon>Eukaryota</taxon>
        <taxon>Metazoa</taxon>
        <taxon>Chordata</taxon>
        <taxon>Cephalochordata</taxon>
        <taxon>Leptocardii</taxon>
        <taxon>Amphioxiformes</taxon>
        <taxon>Branchiostomatidae</taxon>
        <taxon>Branchiostoma</taxon>
    </lineage>
</organism>
<evidence type="ECO:0000250" key="1"/>
<evidence type="ECO:0000255" key="2"/>
<evidence type="ECO:0000255" key="3">
    <source>
        <dbReference type="PROSITE-ProRule" id="PRU00044"/>
    </source>
</evidence>
<evidence type="ECO:0000256" key="4">
    <source>
        <dbReference type="SAM" id="MobiDB-lite"/>
    </source>
</evidence>
<evidence type="ECO:0000305" key="5"/>